<gene>
    <name evidence="1" type="primary">ynfA</name>
    <name type="ordered locus">SeAg_B1668</name>
</gene>
<sequence length="108" mass="11948">MLKTTLLFFVTALCEIIGCFLPWLWLKRGASVWWLLPAAASLALFVWLLTLHPAASGRVYAAYGGVYVCTALLWLRVVDGVRLTVYDWCGALIALCGMLIIVVGWGRT</sequence>
<protein>
    <recommendedName>
        <fullName evidence="1">UPF0060 membrane protein YnfA</fullName>
    </recommendedName>
</protein>
<evidence type="ECO:0000255" key="1">
    <source>
        <dbReference type="HAMAP-Rule" id="MF_00010"/>
    </source>
</evidence>
<comment type="subcellular location">
    <subcellularLocation>
        <location evidence="1">Cell inner membrane</location>
        <topology evidence="1">Multi-pass membrane protein</topology>
    </subcellularLocation>
</comment>
<comment type="similarity">
    <text evidence="1">Belongs to the UPF0060 family.</text>
</comment>
<keyword id="KW-0997">Cell inner membrane</keyword>
<keyword id="KW-1003">Cell membrane</keyword>
<keyword id="KW-0472">Membrane</keyword>
<keyword id="KW-0812">Transmembrane</keyword>
<keyword id="KW-1133">Transmembrane helix</keyword>
<reference key="1">
    <citation type="journal article" date="2011" name="J. Bacteriol.">
        <title>Comparative genomics of 28 Salmonella enterica isolates: evidence for CRISPR-mediated adaptive sublineage evolution.</title>
        <authorList>
            <person name="Fricke W.F."/>
            <person name="Mammel M.K."/>
            <person name="McDermott P.F."/>
            <person name="Tartera C."/>
            <person name="White D.G."/>
            <person name="Leclerc J.E."/>
            <person name="Ravel J."/>
            <person name="Cebula T.A."/>
        </authorList>
    </citation>
    <scope>NUCLEOTIDE SEQUENCE [LARGE SCALE GENOMIC DNA]</scope>
    <source>
        <strain>SL483</strain>
    </source>
</reference>
<dbReference type="EMBL" id="CP001138">
    <property type="protein sequence ID" value="ACH51008.1"/>
    <property type="molecule type" value="Genomic_DNA"/>
</dbReference>
<dbReference type="RefSeq" id="WP_000921389.1">
    <property type="nucleotide sequence ID" value="NC_011149.1"/>
</dbReference>
<dbReference type="SMR" id="B5F6E1"/>
<dbReference type="KEGG" id="sea:SeAg_B1668"/>
<dbReference type="HOGENOM" id="CLU_117653_2_1_6"/>
<dbReference type="Proteomes" id="UP000008819">
    <property type="component" value="Chromosome"/>
</dbReference>
<dbReference type="GO" id="GO:0005886">
    <property type="term" value="C:plasma membrane"/>
    <property type="evidence" value="ECO:0007669"/>
    <property type="project" value="UniProtKB-SubCell"/>
</dbReference>
<dbReference type="HAMAP" id="MF_00010">
    <property type="entry name" value="UPF0060"/>
    <property type="match status" value="1"/>
</dbReference>
<dbReference type="InterPro" id="IPR003844">
    <property type="entry name" value="UPF0060"/>
</dbReference>
<dbReference type="NCBIfam" id="NF002586">
    <property type="entry name" value="PRK02237.1"/>
    <property type="match status" value="1"/>
</dbReference>
<dbReference type="PANTHER" id="PTHR36116">
    <property type="entry name" value="UPF0060 MEMBRANE PROTEIN YNFA"/>
    <property type="match status" value="1"/>
</dbReference>
<dbReference type="PANTHER" id="PTHR36116:SF1">
    <property type="entry name" value="UPF0060 MEMBRANE PROTEIN YNFA"/>
    <property type="match status" value="1"/>
</dbReference>
<dbReference type="Pfam" id="PF02694">
    <property type="entry name" value="UPF0060"/>
    <property type="match status" value="1"/>
</dbReference>
<dbReference type="SUPFAM" id="SSF103481">
    <property type="entry name" value="Multidrug resistance efflux transporter EmrE"/>
    <property type="match status" value="1"/>
</dbReference>
<accession>B5F6E1</accession>
<feature type="chain" id="PRO_1000089254" description="UPF0060 membrane protein YnfA">
    <location>
        <begin position="1"/>
        <end position="108"/>
    </location>
</feature>
<feature type="topological domain" description="Periplasmic" evidence="1">
    <location>
        <begin position="1"/>
        <end position="5"/>
    </location>
</feature>
<feature type="transmembrane region" description="Helical" evidence="1">
    <location>
        <begin position="6"/>
        <end position="26"/>
    </location>
</feature>
<feature type="topological domain" description="Cytoplasmic" evidence="1">
    <location>
        <begin position="27"/>
        <end position="30"/>
    </location>
</feature>
<feature type="transmembrane region" description="Helical" evidence="1">
    <location>
        <begin position="31"/>
        <end position="51"/>
    </location>
</feature>
<feature type="topological domain" description="Periplasmic" evidence="1">
    <location>
        <begin position="52"/>
        <end position="60"/>
    </location>
</feature>
<feature type="transmembrane region" description="Helical" evidence="1">
    <location>
        <begin position="61"/>
        <end position="81"/>
    </location>
</feature>
<feature type="topological domain" description="Cytoplasmic" evidence="1">
    <location>
        <begin position="82"/>
        <end position="84"/>
    </location>
</feature>
<feature type="transmembrane region" description="Helical" evidence="1">
    <location>
        <begin position="85"/>
        <end position="105"/>
    </location>
</feature>
<feature type="topological domain" description="Periplasmic" evidence="1">
    <location>
        <begin position="106"/>
        <end position="108"/>
    </location>
</feature>
<proteinExistence type="inferred from homology"/>
<organism>
    <name type="scientific">Salmonella agona (strain SL483)</name>
    <dbReference type="NCBI Taxonomy" id="454166"/>
    <lineage>
        <taxon>Bacteria</taxon>
        <taxon>Pseudomonadati</taxon>
        <taxon>Pseudomonadota</taxon>
        <taxon>Gammaproteobacteria</taxon>
        <taxon>Enterobacterales</taxon>
        <taxon>Enterobacteriaceae</taxon>
        <taxon>Salmonella</taxon>
    </lineage>
</organism>
<name>YNFA_SALA4</name>